<organism>
    <name type="scientific">Anaplasma phagocytophilum (strain HZ)</name>
    <dbReference type="NCBI Taxonomy" id="212042"/>
    <lineage>
        <taxon>Bacteria</taxon>
        <taxon>Pseudomonadati</taxon>
        <taxon>Pseudomonadota</taxon>
        <taxon>Alphaproteobacteria</taxon>
        <taxon>Rickettsiales</taxon>
        <taxon>Anaplasmataceae</taxon>
        <taxon>Anaplasma</taxon>
        <taxon>phagocytophilum group</taxon>
    </lineage>
</organism>
<sequence length="439" mass="49389">MQQFYCVKEVLNERLKRGYEFAVKNEYIEEKVTEKLQGIAATARMDGFRKGKVSPEFVRRMYGESIAGEVVAQVIDDISSKFLKEGDFGGIVTSGVEIKAYPKVCSNSEGDGGLVYELKFEVMPEVPVVDIDGITLKEIEVNISQEDVDEFLEDLKANYPSFVDVDDESRGVSDGDRVTISYRSAFKGKALRGGSAQGFTFVLGKGQLLEQFERQIVGMKKGESKEFKLEFPLDYMAKHFAGKEVDMHVTVERLSVKDEINDRETLASKCGFGSVEDMVKFATDGLNRRFADMGSVVAQRELLEHLDASYSVDVPEYIVAQELGRMRRELEEGDLNDAEALTKEAEQRVKLGMLLMKVATDAGVAVEVNDILSFIRVNYSAYGRSMEDVLKLFKNREDFREHVKGKVLEDKVVRYIISRAKKDRQSMSAGELKSLFESV</sequence>
<evidence type="ECO:0000255" key="1">
    <source>
        <dbReference type="HAMAP-Rule" id="MF_00303"/>
    </source>
</evidence>
<feature type="chain" id="PRO_0000256528" description="Trigger factor">
    <location>
        <begin position="1"/>
        <end position="439"/>
    </location>
</feature>
<feature type="domain" description="PPIase FKBP-type" evidence="1">
    <location>
        <begin position="175"/>
        <end position="260"/>
    </location>
</feature>
<accession>Q2GJB3</accession>
<dbReference type="EC" id="5.2.1.8" evidence="1"/>
<dbReference type="EMBL" id="CP000235">
    <property type="protein sequence ID" value="ABD44371.1"/>
    <property type="molecule type" value="Genomic_DNA"/>
</dbReference>
<dbReference type="RefSeq" id="WP_011451051.1">
    <property type="nucleotide sequence ID" value="NC_007797.1"/>
</dbReference>
<dbReference type="SMR" id="Q2GJB3"/>
<dbReference type="STRING" id="212042.APH_0971"/>
<dbReference type="PaxDb" id="212042-APH_0971"/>
<dbReference type="EnsemblBacteria" id="ABD44371">
    <property type="protein sequence ID" value="ABD44371"/>
    <property type="gene ID" value="APH_0971"/>
</dbReference>
<dbReference type="KEGG" id="aph:APH_0971"/>
<dbReference type="PATRIC" id="fig|212042.8.peg.1034"/>
<dbReference type="eggNOG" id="COG0544">
    <property type="taxonomic scope" value="Bacteria"/>
</dbReference>
<dbReference type="HOGENOM" id="CLU_033058_2_2_5"/>
<dbReference type="Proteomes" id="UP000001943">
    <property type="component" value="Chromosome"/>
</dbReference>
<dbReference type="GO" id="GO:0005737">
    <property type="term" value="C:cytoplasm"/>
    <property type="evidence" value="ECO:0007669"/>
    <property type="project" value="UniProtKB-SubCell"/>
</dbReference>
<dbReference type="GO" id="GO:0003755">
    <property type="term" value="F:peptidyl-prolyl cis-trans isomerase activity"/>
    <property type="evidence" value="ECO:0007669"/>
    <property type="project" value="UniProtKB-UniRule"/>
</dbReference>
<dbReference type="GO" id="GO:0051301">
    <property type="term" value="P:cell division"/>
    <property type="evidence" value="ECO:0007669"/>
    <property type="project" value="UniProtKB-KW"/>
</dbReference>
<dbReference type="GO" id="GO:0006457">
    <property type="term" value="P:protein folding"/>
    <property type="evidence" value="ECO:0007669"/>
    <property type="project" value="UniProtKB-UniRule"/>
</dbReference>
<dbReference type="GO" id="GO:0015031">
    <property type="term" value="P:protein transport"/>
    <property type="evidence" value="ECO:0007669"/>
    <property type="project" value="UniProtKB-UniRule"/>
</dbReference>
<dbReference type="Gene3D" id="3.10.50.40">
    <property type="match status" value="1"/>
</dbReference>
<dbReference type="Gene3D" id="3.30.70.1050">
    <property type="entry name" value="Trigger factor ribosome-binding domain"/>
    <property type="match status" value="1"/>
</dbReference>
<dbReference type="Gene3D" id="1.10.3120.10">
    <property type="entry name" value="Trigger factor, C-terminal domain"/>
    <property type="match status" value="1"/>
</dbReference>
<dbReference type="HAMAP" id="MF_00303">
    <property type="entry name" value="Trigger_factor_Tig"/>
    <property type="match status" value="1"/>
</dbReference>
<dbReference type="InterPro" id="IPR046357">
    <property type="entry name" value="PPIase_dom_sf"/>
</dbReference>
<dbReference type="InterPro" id="IPR001179">
    <property type="entry name" value="PPIase_FKBP_dom"/>
</dbReference>
<dbReference type="InterPro" id="IPR005215">
    <property type="entry name" value="Trig_fac"/>
</dbReference>
<dbReference type="InterPro" id="IPR008880">
    <property type="entry name" value="Trigger_fac_C"/>
</dbReference>
<dbReference type="InterPro" id="IPR037041">
    <property type="entry name" value="Trigger_fac_C_sf"/>
</dbReference>
<dbReference type="InterPro" id="IPR008881">
    <property type="entry name" value="Trigger_fac_ribosome-bd_bac"/>
</dbReference>
<dbReference type="InterPro" id="IPR036611">
    <property type="entry name" value="Trigger_fac_ribosome-bd_sf"/>
</dbReference>
<dbReference type="InterPro" id="IPR027304">
    <property type="entry name" value="Trigger_fact/SurA_dom_sf"/>
</dbReference>
<dbReference type="NCBIfam" id="TIGR00115">
    <property type="entry name" value="tig"/>
    <property type="match status" value="1"/>
</dbReference>
<dbReference type="Pfam" id="PF00254">
    <property type="entry name" value="FKBP_C"/>
    <property type="match status" value="1"/>
</dbReference>
<dbReference type="Pfam" id="PF05698">
    <property type="entry name" value="Trigger_C"/>
    <property type="match status" value="1"/>
</dbReference>
<dbReference type="Pfam" id="PF05697">
    <property type="entry name" value="Trigger_N"/>
    <property type="match status" value="1"/>
</dbReference>
<dbReference type="PIRSF" id="PIRSF003095">
    <property type="entry name" value="Trigger_factor"/>
    <property type="match status" value="1"/>
</dbReference>
<dbReference type="SUPFAM" id="SSF54534">
    <property type="entry name" value="FKBP-like"/>
    <property type="match status" value="1"/>
</dbReference>
<dbReference type="SUPFAM" id="SSF109998">
    <property type="entry name" value="Triger factor/SurA peptide-binding domain-like"/>
    <property type="match status" value="1"/>
</dbReference>
<dbReference type="SUPFAM" id="SSF102735">
    <property type="entry name" value="Trigger factor ribosome-binding domain"/>
    <property type="match status" value="1"/>
</dbReference>
<dbReference type="PROSITE" id="PS50059">
    <property type="entry name" value="FKBP_PPIASE"/>
    <property type="match status" value="1"/>
</dbReference>
<comment type="function">
    <text evidence="1">Involved in protein export. Acts as a chaperone by maintaining the newly synthesized protein in an open conformation. Functions as a peptidyl-prolyl cis-trans isomerase.</text>
</comment>
<comment type="catalytic activity">
    <reaction evidence="1">
        <text>[protein]-peptidylproline (omega=180) = [protein]-peptidylproline (omega=0)</text>
        <dbReference type="Rhea" id="RHEA:16237"/>
        <dbReference type="Rhea" id="RHEA-COMP:10747"/>
        <dbReference type="Rhea" id="RHEA-COMP:10748"/>
        <dbReference type="ChEBI" id="CHEBI:83833"/>
        <dbReference type="ChEBI" id="CHEBI:83834"/>
        <dbReference type="EC" id="5.2.1.8"/>
    </reaction>
</comment>
<comment type="subcellular location">
    <subcellularLocation>
        <location>Cytoplasm</location>
    </subcellularLocation>
    <text evidence="1">About half TF is bound to the ribosome near the polypeptide exit tunnel while the other half is free in the cytoplasm.</text>
</comment>
<comment type="domain">
    <text evidence="1">Consists of 3 domains; the N-terminus binds the ribosome, the middle domain has PPIase activity, while the C-terminus has intrinsic chaperone activity on its own.</text>
</comment>
<comment type="similarity">
    <text evidence="1">Belongs to the FKBP-type PPIase family. Tig subfamily.</text>
</comment>
<reference key="1">
    <citation type="journal article" date="2006" name="PLoS Genet.">
        <title>Comparative genomics of emerging human ehrlichiosis agents.</title>
        <authorList>
            <person name="Dunning Hotopp J.C."/>
            <person name="Lin M."/>
            <person name="Madupu R."/>
            <person name="Crabtree J."/>
            <person name="Angiuoli S.V."/>
            <person name="Eisen J.A."/>
            <person name="Seshadri R."/>
            <person name="Ren Q."/>
            <person name="Wu M."/>
            <person name="Utterback T.R."/>
            <person name="Smith S."/>
            <person name="Lewis M."/>
            <person name="Khouri H."/>
            <person name="Zhang C."/>
            <person name="Niu H."/>
            <person name="Lin Q."/>
            <person name="Ohashi N."/>
            <person name="Zhi N."/>
            <person name="Nelson W.C."/>
            <person name="Brinkac L.M."/>
            <person name="Dodson R.J."/>
            <person name="Rosovitz M.J."/>
            <person name="Sundaram J.P."/>
            <person name="Daugherty S.C."/>
            <person name="Davidsen T."/>
            <person name="Durkin A.S."/>
            <person name="Gwinn M.L."/>
            <person name="Haft D.H."/>
            <person name="Selengut J.D."/>
            <person name="Sullivan S.A."/>
            <person name="Zafar N."/>
            <person name="Zhou L."/>
            <person name="Benahmed F."/>
            <person name="Forberger H."/>
            <person name="Halpin R."/>
            <person name="Mulligan S."/>
            <person name="Robinson J."/>
            <person name="White O."/>
            <person name="Rikihisa Y."/>
            <person name="Tettelin H."/>
        </authorList>
    </citation>
    <scope>NUCLEOTIDE SEQUENCE [LARGE SCALE GENOMIC DNA]</scope>
    <source>
        <strain>HZ</strain>
    </source>
</reference>
<proteinExistence type="inferred from homology"/>
<name>TIG_ANAPZ</name>
<protein>
    <recommendedName>
        <fullName evidence="1">Trigger factor</fullName>
        <shortName evidence="1">TF</shortName>
        <ecNumber evidence="1">5.2.1.8</ecNumber>
    </recommendedName>
    <alternativeName>
        <fullName evidence="1">PPIase</fullName>
    </alternativeName>
</protein>
<keyword id="KW-0131">Cell cycle</keyword>
<keyword id="KW-0132">Cell division</keyword>
<keyword id="KW-0143">Chaperone</keyword>
<keyword id="KW-0963">Cytoplasm</keyword>
<keyword id="KW-0413">Isomerase</keyword>
<keyword id="KW-0697">Rotamase</keyword>
<gene>
    <name evidence="1" type="primary">tig</name>
    <name type="ordered locus">APH_0971</name>
</gene>